<dbReference type="EC" id="6.1.1.11" evidence="1"/>
<dbReference type="EMBL" id="CP000813">
    <property type="protein sequence ID" value="ABV61204.1"/>
    <property type="molecule type" value="Genomic_DNA"/>
</dbReference>
<dbReference type="RefSeq" id="WP_012009060.1">
    <property type="nucleotide sequence ID" value="NZ_VEIS01000032.1"/>
</dbReference>
<dbReference type="SMR" id="A8FAD7"/>
<dbReference type="STRING" id="315750.BPUM_0509"/>
<dbReference type="GeneID" id="5619226"/>
<dbReference type="KEGG" id="bpu:BPUM_0509"/>
<dbReference type="eggNOG" id="COG0172">
    <property type="taxonomic scope" value="Bacteria"/>
</dbReference>
<dbReference type="HOGENOM" id="CLU_023797_1_1_9"/>
<dbReference type="OrthoDB" id="9804647at2"/>
<dbReference type="UniPathway" id="UPA00906">
    <property type="reaction ID" value="UER00895"/>
</dbReference>
<dbReference type="Proteomes" id="UP000001355">
    <property type="component" value="Chromosome"/>
</dbReference>
<dbReference type="GO" id="GO:0005737">
    <property type="term" value="C:cytoplasm"/>
    <property type="evidence" value="ECO:0007669"/>
    <property type="project" value="UniProtKB-SubCell"/>
</dbReference>
<dbReference type="GO" id="GO:0005524">
    <property type="term" value="F:ATP binding"/>
    <property type="evidence" value="ECO:0007669"/>
    <property type="project" value="UniProtKB-UniRule"/>
</dbReference>
<dbReference type="GO" id="GO:0140096">
    <property type="term" value="F:catalytic activity, acting on a protein"/>
    <property type="evidence" value="ECO:0007669"/>
    <property type="project" value="UniProtKB-ARBA"/>
</dbReference>
<dbReference type="GO" id="GO:0004828">
    <property type="term" value="F:serine-tRNA ligase activity"/>
    <property type="evidence" value="ECO:0007669"/>
    <property type="project" value="UniProtKB-UniRule"/>
</dbReference>
<dbReference type="GO" id="GO:0016740">
    <property type="term" value="F:transferase activity"/>
    <property type="evidence" value="ECO:0007669"/>
    <property type="project" value="UniProtKB-ARBA"/>
</dbReference>
<dbReference type="GO" id="GO:0016260">
    <property type="term" value="P:selenocysteine biosynthetic process"/>
    <property type="evidence" value="ECO:0007669"/>
    <property type="project" value="UniProtKB-UniRule"/>
</dbReference>
<dbReference type="GO" id="GO:0006434">
    <property type="term" value="P:seryl-tRNA aminoacylation"/>
    <property type="evidence" value="ECO:0007669"/>
    <property type="project" value="UniProtKB-UniRule"/>
</dbReference>
<dbReference type="CDD" id="cd00770">
    <property type="entry name" value="SerRS_core"/>
    <property type="match status" value="1"/>
</dbReference>
<dbReference type="Gene3D" id="3.30.930.10">
    <property type="entry name" value="Bira Bifunctional Protein, Domain 2"/>
    <property type="match status" value="1"/>
</dbReference>
<dbReference type="Gene3D" id="1.10.287.40">
    <property type="entry name" value="Serine-tRNA synthetase, tRNA binding domain"/>
    <property type="match status" value="1"/>
</dbReference>
<dbReference type="HAMAP" id="MF_00176">
    <property type="entry name" value="Ser_tRNA_synth_type1"/>
    <property type="match status" value="1"/>
</dbReference>
<dbReference type="InterPro" id="IPR002314">
    <property type="entry name" value="aa-tRNA-synt_IIb"/>
</dbReference>
<dbReference type="InterPro" id="IPR006195">
    <property type="entry name" value="aa-tRNA-synth_II"/>
</dbReference>
<dbReference type="InterPro" id="IPR045864">
    <property type="entry name" value="aa-tRNA-synth_II/BPL/LPL"/>
</dbReference>
<dbReference type="InterPro" id="IPR002317">
    <property type="entry name" value="Ser-tRNA-ligase_type_1"/>
</dbReference>
<dbReference type="InterPro" id="IPR015866">
    <property type="entry name" value="Ser-tRNA-synth_1_N"/>
</dbReference>
<dbReference type="InterPro" id="IPR042103">
    <property type="entry name" value="SerRS_1_N_sf"/>
</dbReference>
<dbReference type="InterPro" id="IPR033729">
    <property type="entry name" value="SerRS_core"/>
</dbReference>
<dbReference type="InterPro" id="IPR010978">
    <property type="entry name" value="tRNA-bd_arm"/>
</dbReference>
<dbReference type="NCBIfam" id="TIGR00414">
    <property type="entry name" value="serS"/>
    <property type="match status" value="1"/>
</dbReference>
<dbReference type="PANTHER" id="PTHR43697:SF1">
    <property type="entry name" value="SERINE--TRNA LIGASE"/>
    <property type="match status" value="1"/>
</dbReference>
<dbReference type="PANTHER" id="PTHR43697">
    <property type="entry name" value="SERYL-TRNA SYNTHETASE"/>
    <property type="match status" value="1"/>
</dbReference>
<dbReference type="Pfam" id="PF02403">
    <property type="entry name" value="Seryl_tRNA_N"/>
    <property type="match status" value="1"/>
</dbReference>
<dbReference type="Pfam" id="PF00587">
    <property type="entry name" value="tRNA-synt_2b"/>
    <property type="match status" value="1"/>
</dbReference>
<dbReference type="PIRSF" id="PIRSF001529">
    <property type="entry name" value="Ser-tRNA-synth_IIa"/>
    <property type="match status" value="1"/>
</dbReference>
<dbReference type="PRINTS" id="PR00981">
    <property type="entry name" value="TRNASYNTHSER"/>
</dbReference>
<dbReference type="SUPFAM" id="SSF55681">
    <property type="entry name" value="Class II aaRS and biotin synthetases"/>
    <property type="match status" value="1"/>
</dbReference>
<dbReference type="SUPFAM" id="SSF46589">
    <property type="entry name" value="tRNA-binding arm"/>
    <property type="match status" value="1"/>
</dbReference>
<dbReference type="PROSITE" id="PS50862">
    <property type="entry name" value="AA_TRNA_LIGASE_II"/>
    <property type="match status" value="1"/>
</dbReference>
<comment type="function">
    <text evidence="1">Catalyzes the attachment of serine to tRNA(Ser). Is also able to aminoacylate tRNA(Sec) with serine, to form the misacylated tRNA L-seryl-tRNA(Sec), which will be further converted into selenocysteinyl-tRNA(Sec).</text>
</comment>
<comment type="catalytic activity">
    <reaction evidence="1">
        <text>tRNA(Ser) + L-serine + ATP = L-seryl-tRNA(Ser) + AMP + diphosphate + H(+)</text>
        <dbReference type="Rhea" id="RHEA:12292"/>
        <dbReference type="Rhea" id="RHEA-COMP:9669"/>
        <dbReference type="Rhea" id="RHEA-COMP:9703"/>
        <dbReference type="ChEBI" id="CHEBI:15378"/>
        <dbReference type="ChEBI" id="CHEBI:30616"/>
        <dbReference type="ChEBI" id="CHEBI:33019"/>
        <dbReference type="ChEBI" id="CHEBI:33384"/>
        <dbReference type="ChEBI" id="CHEBI:78442"/>
        <dbReference type="ChEBI" id="CHEBI:78533"/>
        <dbReference type="ChEBI" id="CHEBI:456215"/>
        <dbReference type="EC" id="6.1.1.11"/>
    </reaction>
</comment>
<comment type="catalytic activity">
    <reaction evidence="1">
        <text>tRNA(Sec) + L-serine + ATP = L-seryl-tRNA(Sec) + AMP + diphosphate + H(+)</text>
        <dbReference type="Rhea" id="RHEA:42580"/>
        <dbReference type="Rhea" id="RHEA-COMP:9742"/>
        <dbReference type="Rhea" id="RHEA-COMP:10128"/>
        <dbReference type="ChEBI" id="CHEBI:15378"/>
        <dbReference type="ChEBI" id="CHEBI:30616"/>
        <dbReference type="ChEBI" id="CHEBI:33019"/>
        <dbReference type="ChEBI" id="CHEBI:33384"/>
        <dbReference type="ChEBI" id="CHEBI:78442"/>
        <dbReference type="ChEBI" id="CHEBI:78533"/>
        <dbReference type="ChEBI" id="CHEBI:456215"/>
        <dbReference type="EC" id="6.1.1.11"/>
    </reaction>
</comment>
<comment type="pathway">
    <text evidence="1">Aminoacyl-tRNA biosynthesis; selenocysteinyl-tRNA(Sec) biosynthesis; L-seryl-tRNA(Sec) from L-serine and tRNA(Sec): step 1/1.</text>
</comment>
<comment type="subunit">
    <text evidence="1">Homodimer. The tRNA molecule binds across the dimer.</text>
</comment>
<comment type="subcellular location">
    <subcellularLocation>
        <location evidence="1">Cytoplasm</location>
    </subcellularLocation>
</comment>
<comment type="domain">
    <text evidence="1">Consists of two distinct domains, a catalytic core and a N-terminal extension that is involved in tRNA binding.</text>
</comment>
<comment type="similarity">
    <text evidence="1">Belongs to the class-II aminoacyl-tRNA synthetase family. Type-1 seryl-tRNA synthetase subfamily.</text>
</comment>
<name>SYS_BACP2</name>
<proteinExistence type="inferred from homology"/>
<accession>A8FAD7</accession>
<feature type="chain" id="PRO_1000058350" description="Serine--tRNA ligase">
    <location>
        <begin position="1"/>
        <end position="424"/>
    </location>
</feature>
<feature type="binding site" evidence="1">
    <location>
        <begin position="231"/>
        <end position="233"/>
    </location>
    <ligand>
        <name>L-serine</name>
        <dbReference type="ChEBI" id="CHEBI:33384"/>
    </ligand>
</feature>
<feature type="binding site" evidence="1">
    <location>
        <begin position="262"/>
        <end position="264"/>
    </location>
    <ligand>
        <name>ATP</name>
        <dbReference type="ChEBI" id="CHEBI:30616"/>
    </ligand>
</feature>
<feature type="binding site" evidence="1">
    <location>
        <position position="285"/>
    </location>
    <ligand>
        <name>L-serine</name>
        <dbReference type="ChEBI" id="CHEBI:33384"/>
    </ligand>
</feature>
<feature type="binding site" evidence="1">
    <location>
        <begin position="349"/>
        <end position="352"/>
    </location>
    <ligand>
        <name>ATP</name>
        <dbReference type="ChEBI" id="CHEBI:30616"/>
    </ligand>
</feature>
<feature type="binding site" evidence="1">
    <location>
        <position position="385"/>
    </location>
    <ligand>
        <name>L-serine</name>
        <dbReference type="ChEBI" id="CHEBI:33384"/>
    </ligand>
</feature>
<protein>
    <recommendedName>
        <fullName evidence="1">Serine--tRNA ligase</fullName>
        <ecNumber evidence="1">6.1.1.11</ecNumber>
    </recommendedName>
    <alternativeName>
        <fullName evidence="1">Seryl-tRNA synthetase</fullName>
        <shortName evidence="1">SerRS</shortName>
    </alternativeName>
    <alternativeName>
        <fullName evidence="1">Seryl-tRNA(Ser/Sec) synthetase</fullName>
    </alternativeName>
</protein>
<evidence type="ECO:0000255" key="1">
    <source>
        <dbReference type="HAMAP-Rule" id="MF_00176"/>
    </source>
</evidence>
<reference key="1">
    <citation type="journal article" date="2007" name="PLoS ONE">
        <title>Paradoxical DNA repair and peroxide resistance gene conservation in Bacillus pumilus SAFR-032.</title>
        <authorList>
            <person name="Gioia J."/>
            <person name="Yerrapragada S."/>
            <person name="Qin X."/>
            <person name="Jiang H."/>
            <person name="Igboeli O.C."/>
            <person name="Muzny D."/>
            <person name="Dugan-Rocha S."/>
            <person name="Ding Y."/>
            <person name="Hawes A."/>
            <person name="Liu W."/>
            <person name="Perez L."/>
            <person name="Kovar C."/>
            <person name="Dinh H."/>
            <person name="Lee S."/>
            <person name="Nazareth L."/>
            <person name="Blyth P."/>
            <person name="Holder M."/>
            <person name="Buhay C."/>
            <person name="Tirumalai M.R."/>
            <person name="Liu Y."/>
            <person name="Dasgupta I."/>
            <person name="Bokhetache L."/>
            <person name="Fujita M."/>
            <person name="Karouia F."/>
            <person name="Eswara Moorthy P."/>
            <person name="Siefert J."/>
            <person name="Uzman A."/>
            <person name="Buzumbo P."/>
            <person name="Verma A."/>
            <person name="Zwiya H."/>
            <person name="McWilliams B.D."/>
            <person name="Olowu A."/>
            <person name="Clinkenbeard K.D."/>
            <person name="Newcombe D."/>
            <person name="Golebiewski L."/>
            <person name="Petrosino J.F."/>
            <person name="Nicholson W.L."/>
            <person name="Fox G.E."/>
            <person name="Venkateswaran K."/>
            <person name="Highlander S.K."/>
            <person name="Weinstock G.M."/>
        </authorList>
    </citation>
    <scope>NUCLEOTIDE SEQUENCE [LARGE SCALE GENOMIC DNA]</scope>
    <source>
        <strain>SAFR-032</strain>
    </source>
</reference>
<organism>
    <name type="scientific">Bacillus pumilus (strain SAFR-032)</name>
    <dbReference type="NCBI Taxonomy" id="315750"/>
    <lineage>
        <taxon>Bacteria</taxon>
        <taxon>Bacillati</taxon>
        <taxon>Bacillota</taxon>
        <taxon>Bacilli</taxon>
        <taxon>Bacillales</taxon>
        <taxon>Bacillaceae</taxon>
        <taxon>Bacillus</taxon>
    </lineage>
</organism>
<keyword id="KW-0030">Aminoacyl-tRNA synthetase</keyword>
<keyword id="KW-0067">ATP-binding</keyword>
<keyword id="KW-0963">Cytoplasm</keyword>
<keyword id="KW-0436">Ligase</keyword>
<keyword id="KW-0547">Nucleotide-binding</keyword>
<keyword id="KW-0648">Protein biosynthesis</keyword>
<gene>
    <name evidence="1" type="primary">serS</name>
    <name type="ordered locus">BPUM_0509</name>
</gene>
<sequence length="424" mass="48858">MLDIKQLRTDFDQIKEKLAHRGEDLADFDKFGELDQKRRELIGKTEVLKSRRNEVSQQVAVLKREKKDADHIIQEMREVGDEIKKLDDELRTVEESLQHILFSIPNIPHDTVPVGETEDDNVEVRKWGEQPAFSFEPKPHWDVADELNILDFERAGKVTGSRFVFYKGLGARLERALYNFMLDLHVDEFGFTEVLPPYMVNRASMTGTGQLPKFEEDAFKIREEDYFLIPTAEVPITNMHRDEIIEGEQLPINYAAFSACFRSEAGSAGRDTRGLIRQHQFNKVELVKFVRPEDSYEELEKLTNQAEKVLQLLNLPYRVMSMCTGDLGFTAAKKYDIEVWIPSQDTYREISSCSNFEAFQARRANIRFRPEPKAKPEHVHTLNGSGLAVGRTVAAILENYQQEDGTVIIPEVLRPYMGNKEVMK</sequence>